<sequence>MAQTLYDKLWNSHVVHTEEDGTALLYIDRQLLHEVTSPQAFEGLKLAQRPVWRISANLAVSDHNVPTTDRSHGIADPVSKLQVDTLDANCDAYGITQFKMNDVRQGIVHIIGPEQGATLPGMTIVCGDSHTSTHGAFGALAHGIGTSEVEHVLATQTLLQKKSKNMLVKVEGQLPRGCTAKDIVLAIIGRIGTAGGTGYAIEFGGSTIRALTMEGRMTVCNMAIEAGARAGMVAVDDTTVEYLKGRPFVPTGAEWDQAVEYWKTFRSDEGAQFDRVVELDAAQIVPQVTWGTSPEMVTSIDGRVPDPEREKDPVKRDAMERALAYMALAPNTPIEAIKVDKIFIGSCTNARIEDIRAAAYVVKKLNRRVAPNVRLAMVVPGSGLVKAQAEREGLDKVFTEAGFEWREPGCSMCLAMNADRLEPGERCASTSNRNFEGRQGQGGRTHLVSPAMAAAAAIEGHFVDIRRLG</sequence>
<feature type="chain" id="PRO_0000076733" description="3-isopropylmalate dehydratase large subunit">
    <location>
        <begin position="1"/>
        <end position="469"/>
    </location>
</feature>
<feature type="binding site" evidence="1">
    <location>
        <position position="347"/>
    </location>
    <ligand>
        <name>[4Fe-4S] cluster</name>
        <dbReference type="ChEBI" id="CHEBI:49883"/>
    </ligand>
</feature>
<feature type="binding site" evidence="1">
    <location>
        <position position="410"/>
    </location>
    <ligand>
        <name>[4Fe-4S] cluster</name>
        <dbReference type="ChEBI" id="CHEBI:49883"/>
    </ligand>
</feature>
<feature type="binding site" evidence="1">
    <location>
        <position position="413"/>
    </location>
    <ligand>
        <name>[4Fe-4S] cluster</name>
        <dbReference type="ChEBI" id="CHEBI:49883"/>
    </ligand>
</feature>
<name>LEUC_BURPS</name>
<comment type="function">
    <text evidence="1">Catalyzes the isomerization between 2-isopropylmalate and 3-isopropylmalate, via the formation of 2-isopropylmaleate.</text>
</comment>
<comment type="catalytic activity">
    <reaction evidence="1">
        <text>(2R,3S)-3-isopropylmalate = (2S)-2-isopropylmalate</text>
        <dbReference type="Rhea" id="RHEA:32287"/>
        <dbReference type="ChEBI" id="CHEBI:1178"/>
        <dbReference type="ChEBI" id="CHEBI:35121"/>
        <dbReference type="EC" id="4.2.1.33"/>
    </reaction>
</comment>
<comment type="cofactor">
    <cofactor evidence="1">
        <name>[4Fe-4S] cluster</name>
        <dbReference type="ChEBI" id="CHEBI:49883"/>
    </cofactor>
    <text evidence="1">Binds 1 [4Fe-4S] cluster per subunit.</text>
</comment>
<comment type="pathway">
    <text evidence="1">Amino-acid biosynthesis; L-leucine biosynthesis; L-leucine from 3-methyl-2-oxobutanoate: step 2/4.</text>
</comment>
<comment type="subunit">
    <text evidence="1">Heterodimer of LeuC and LeuD.</text>
</comment>
<comment type="similarity">
    <text evidence="1">Belongs to the aconitase/IPM isomerase family. LeuC type 1 subfamily.</text>
</comment>
<evidence type="ECO:0000255" key="1">
    <source>
        <dbReference type="HAMAP-Rule" id="MF_01026"/>
    </source>
</evidence>
<proteinExistence type="inferred from homology"/>
<dbReference type="EC" id="4.2.1.33" evidence="1"/>
<dbReference type="EMBL" id="BX571966">
    <property type="protein sequence ID" value="CAH39181.1"/>
    <property type="molecule type" value="Genomic_DNA"/>
</dbReference>
<dbReference type="RefSeq" id="WP_004528981.1">
    <property type="nucleotide sequence ID" value="NZ_CP009537.1"/>
</dbReference>
<dbReference type="RefSeq" id="YP_111713.1">
    <property type="nucleotide sequence ID" value="NC_006351.1"/>
</dbReference>
<dbReference type="SMR" id="Q63JK9"/>
<dbReference type="STRING" id="272560.BPSS1707"/>
<dbReference type="GeneID" id="93063906"/>
<dbReference type="KEGG" id="bps:BPSS1707"/>
<dbReference type="PATRIC" id="fig|272560.51.peg.5120"/>
<dbReference type="eggNOG" id="COG0065">
    <property type="taxonomic scope" value="Bacteria"/>
</dbReference>
<dbReference type="UniPathway" id="UPA00048">
    <property type="reaction ID" value="UER00071"/>
</dbReference>
<dbReference type="Proteomes" id="UP000000605">
    <property type="component" value="Chromosome 2"/>
</dbReference>
<dbReference type="GO" id="GO:0003861">
    <property type="term" value="F:3-isopropylmalate dehydratase activity"/>
    <property type="evidence" value="ECO:0007669"/>
    <property type="project" value="UniProtKB-UniRule"/>
</dbReference>
<dbReference type="GO" id="GO:0051539">
    <property type="term" value="F:4 iron, 4 sulfur cluster binding"/>
    <property type="evidence" value="ECO:0007669"/>
    <property type="project" value="UniProtKB-KW"/>
</dbReference>
<dbReference type="GO" id="GO:0046872">
    <property type="term" value="F:metal ion binding"/>
    <property type="evidence" value="ECO:0007669"/>
    <property type="project" value="UniProtKB-KW"/>
</dbReference>
<dbReference type="GO" id="GO:0009098">
    <property type="term" value="P:L-leucine biosynthetic process"/>
    <property type="evidence" value="ECO:0007669"/>
    <property type="project" value="UniProtKB-UniRule"/>
</dbReference>
<dbReference type="CDD" id="cd01583">
    <property type="entry name" value="IPMI"/>
    <property type="match status" value="1"/>
</dbReference>
<dbReference type="FunFam" id="3.30.499.10:FF:000007">
    <property type="entry name" value="3-isopropylmalate dehydratase large subunit"/>
    <property type="match status" value="1"/>
</dbReference>
<dbReference type="Gene3D" id="3.30.499.10">
    <property type="entry name" value="Aconitase, domain 3"/>
    <property type="match status" value="2"/>
</dbReference>
<dbReference type="HAMAP" id="MF_01026">
    <property type="entry name" value="LeuC_type1"/>
    <property type="match status" value="1"/>
</dbReference>
<dbReference type="InterPro" id="IPR004430">
    <property type="entry name" value="3-IsopropMal_deHydase_lsu"/>
</dbReference>
<dbReference type="InterPro" id="IPR015931">
    <property type="entry name" value="Acnase/IPM_dHydase_lsu_aba_1/3"/>
</dbReference>
<dbReference type="InterPro" id="IPR001030">
    <property type="entry name" value="Acoase/IPM_deHydtase_lsu_aba"/>
</dbReference>
<dbReference type="InterPro" id="IPR018136">
    <property type="entry name" value="Aconitase_4Fe-4S_BS"/>
</dbReference>
<dbReference type="InterPro" id="IPR036008">
    <property type="entry name" value="Aconitase_4Fe-4S_dom"/>
</dbReference>
<dbReference type="InterPro" id="IPR050067">
    <property type="entry name" value="IPM_dehydratase_rel_enz"/>
</dbReference>
<dbReference type="InterPro" id="IPR033941">
    <property type="entry name" value="IPMI_cat"/>
</dbReference>
<dbReference type="NCBIfam" id="TIGR00170">
    <property type="entry name" value="leuC"/>
    <property type="match status" value="1"/>
</dbReference>
<dbReference type="NCBIfam" id="NF004016">
    <property type="entry name" value="PRK05478.1"/>
    <property type="match status" value="1"/>
</dbReference>
<dbReference type="NCBIfam" id="NF009116">
    <property type="entry name" value="PRK12466.1"/>
    <property type="match status" value="1"/>
</dbReference>
<dbReference type="PANTHER" id="PTHR43822:SF9">
    <property type="entry name" value="3-ISOPROPYLMALATE DEHYDRATASE"/>
    <property type="match status" value="1"/>
</dbReference>
<dbReference type="PANTHER" id="PTHR43822">
    <property type="entry name" value="HOMOACONITASE, MITOCHONDRIAL-RELATED"/>
    <property type="match status" value="1"/>
</dbReference>
<dbReference type="Pfam" id="PF00330">
    <property type="entry name" value="Aconitase"/>
    <property type="match status" value="1"/>
</dbReference>
<dbReference type="PRINTS" id="PR00415">
    <property type="entry name" value="ACONITASE"/>
</dbReference>
<dbReference type="SUPFAM" id="SSF53732">
    <property type="entry name" value="Aconitase iron-sulfur domain"/>
    <property type="match status" value="1"/>
</dbReference>
<dbReference type="PROSITE" id="PS00450">
    <property type="entry name" value="ACONITASE_1"/>
    <property type="match status" value="1"/>
</dbReference>
<dbReference type="PROSITE" id="PS01244">
    <property type="entry name" value="ACONITASE_2"/>
    <property type="match status" value="1"/>
</dbReference>
<organism>
    <name type="scientific">Burkholderia pseudomallei (strain K96243)</name>
    <dbReference type="NCBI Taxonomy" id="272560"/>
    <lineage>
        <taxon>Bacteria</taxon>
        <taxon>Pseudomonadati</taxon>
        <taxon>Pseudomonadota</taxon>
        <taxon>Betaproteobacteria</taxon>
        <taxon>Burkholderiales</taxon>
        <taxon>Burkholderiaceae</taxon>
        <taxon>Burkholderia</taxon>
        <taxon>pseudomallei group</taxon>
    </lineage>
</organism>
<gene>
    <name evidence="1" type="primary">leuC</name>
    <name type="ordered locus">BPSS1707</name>
</gene>
<protein>
    <recommendedName>
        <fullName evidence="1">3-isopropylmalate dehydratase large subunit</fullName>
        <ecNumber evidence="1">4.2.1.33</ecNumber>
    </recommendedName>
    <alternativeName>
        <fullName evidence="1">Alpha-IPM isomerase</fullName>
        <shortName evidence="1">IPMI</shortName>
    </alternativeName>
    <alternativeName>
        <fullName evidence="1">Isopropylmalate isomerase</fullName>
    </alternativeName>
</protein>
<keyword id="KW-0004">4Fe-4S</keyword>
<keyword id="KW-0028">Amino-acid biosynthesis</keyword>
<keyword id="KW-0100">Branched-chain amino acid biosynthesis</keyword>
<keyword id="KW-0408">Iron</keyword>
<keyword id="KW-0411">Iron-sulfur</keyword>
<keyword id="KW-0432">Leucine biosynthesis</keyword>
<keyword id="KW-0456">Lyase</keyword>
<keyword id="KW-0479">Metal-binding</keyword>
<keyword id="KW-1185">Reference proteome</keyword>
<reference key="1">
    <citation type="journal article" date="2004" name="Proc. Natl. Acad. Sci. U.S.A.">
        <title>Genomic plasticity of the causative agent of melioidosis, Burkholderia pseudomallei.</title>
        <authorList>
            <person name="Holden M.T.G."/>
            <person name="Titball R.W."/>
            <person name="Peacock S.J."/>
            <person name="Cerdeno-Tarraga A.-M."/>
            <person name="Atkins T."/>
            <person name="Crossman L.C."/>
            <person name="Pitt T."/>
            <person name="Churcher C."/>
            <person name="Mungall K.L."/>
            <person name="Bentley S.D."/>
            <person name="Sebaihia M."/>
            <person name="Thomson N.R."/>
            <person name="Bason N."/>
            <person name="Beacham I.R."/>
            <person name="Brooks K."/>
            <person name="Brown K.A."/>
            <person name="Brown N.F."/>
            <person name="Challis G.L."/>
            <person name="Cherevach I."/>
            <person name="Chillingworth T."/>
            <person name="Cronin A."/>
            <person name="Crossett B."/>
            <person name="Davis P."/>
            <person name="DeShazer D."/>
            <person name="Feltwell T."/>
            <person name="Fraser A."/>
            <person name="Hance Z."/>
            <person name="Hauser H."/>
            <person name="Holroyd S."/>
            <person name="Jagels K."/>
            <person name="Keith K.E."/>
            <person name="Maddison M."/>
            <person name="Moule S."/>
            <person name="Price C."/>
            <person name="Quail M.A."/>
            <person name="Rabbinowitsch E."/>
            <person name="Rutherford K."/>
            <person name="Sanders M."/>
            <person name="Simmonds M."/>
            <person name="Songsivilai S."/>
            <person name="Stevens K."/>
            <person name="Tumapa S."/>
            <person name="Vesaratchavest M."/>
            <person name="Whitehead S."/>
            <person name="Yeats C."/>
            <person name="Barrell B.G."/>
            <person name="Oyston P.C.F."/>
            <person name="Parkhill J."/>
        </authorList>
    </citation>
    <scope>NUCLEOTIDE SEQUENCE [LARGE SCALE GENOMIC DNA]</scope>
    <source>
        <strain>K96243</strain>
    </source>
</reference>
<accession>Q63JK9</accession>